<name>INPP_HUMAN</name>
<evidence type="ECO:0000250" key="1">
    <source>
        <dbReference type="UniProtKB" id="P21327"/>
    </source>
</evidence>
<evidence type="ECO:0000269" key="2">
    <source>
    </source>
</evidence>
<evidence type="ECO:0000269" key="3">
    <source>
    </source>
</evidence>
<evidence type="ECO:0000305" key="4"/>
<evidence type="ECO:0000312" key="5">
    <source>
        <dbReference type="HGNC" id="HGNC:6071"/>
    </source>
</evidence>
<evidence type="ECO:0007744" key="6">
    <source>
    </source>
</evidence>
<keyword id="KW-0378">Hydrolase</keyword>
<keyword id="KW-0452">Lithium</keyword>
<keyword id="KW-0460">Magnesium</keyword>
<keyword id="KW-0479">Metal-binding</keyword>
<keyword id="KW-0597">Phosphoprotein</keyword>
<keyword id="KW-1267">Proteomics identification</keyword>
<keyword id="KW-1185">Reference proteome</keyword>
<gene>
    <name evidence="5" type="primary">INPP1</name>
</gene>
<protein>
    <recommendedName>
        <fullName evidence="4">Inositol polyphosphate 1-phosphatase</fullName>
        <shortName>IPP</shortName>
        <shortName>IPPase</shortName>
        <ecNumber evidence="2">3.1.3.57</ecNumber>
    </recommendedName>
</protein>
<sequence length="399" mass="43998">MSDILRELLCVSEKAANIARACRQQEALFQLLIEEKKEGEKNKKFAVDFKTLADVLVQEVIKQNMENKFPGLEKNIFGEESNEFTNDWGEKITLRLCSTEEETAELLSKVLNGNKVASEALARVVHQDVAFTDPTLDSTEINVPQDILGIWVDPIDSTYQYIKGSADIKSNQGIFPCGLQCVTILIGVYDIQTGVPLMGVINQPFVSRDPNTLRWKGQCYWGLSYMGTNMHSLQLTISRRNGSETHTGNTGSEAAFSPSFSAVISTSEKETIKAALSRVCGDRIFGAAGAGYKSLCVVQGLVDIYIFSEDTTFKWDSCAAHAILRAMGGGIVDLKECLERNPETGLDLPQLVYHVENEGAAGVDRWANKGGLIAYRSRKRLETFLSLLVQNLAPAETHT</sequence>
<comment type="function">
    <text evidence="2">Mg(2+)-dependent phosphatase that catalyzes the hydrolysis of the 1-position phosphate from inositol 1,4-bisphosphate and inositol 1,3,4-trisphosphate and participates in inositol phosphate metabolism.</text>
</comment>
<comment type="catalytic activity">
    <reaction evidence="2">
        <text>1D-myo-inositol 1,4-bisphosphate + H2O = 1D-myo-inositol 4-phosphate + phosphate</text>
        <dbReference type="Rhea" id="RHEA:15553"/>
        <dbReference type="ChEBI" id="CHEBI:15377"/>
        <dbReference type="ChEBI" id="CHEBI:43474"/>
        <dbReference type="ChEBI" id="CHEBI:58282"/>
        <dbReference type="ChEBI" id="CHEBI:58469"/>
        <dbReference type="EC" id="3.1.3.57"/>
    </reaction>
    <physiologicalReaction direction="left-to-right" evidence="1">
        <dbReference type="Rhea" id="RHEA:15554"/>
    </physiologicalReaction>
</comment>
<comment type="catalytic activity">
    <reaction evidence="1">
        <text>1D-myo-inositol 1,3,4-trisphosphate + H2O = 1D-myo-inositol 3,4-bisphosphate + phosphate</text>
        <dbReference type="Rhea" id="RHEA:70319"/>
        <dbReference type="ChEBI" id="CHEBI:15377"/>
        <dbReference type="ChEBI" id="CHEBI:43474"/>
        <dbReference type="ChEBI" id="CHEBI:58414"/>
        <dbReference type="ChEBI" id="CHEBI:83241"/>
    </reaction>
    <physiologicalReaction direction="left-to-right" evidence="1">
        <dbReference type="Rhea" id="RHEA:70320"/>
    </physiologicalReaction>
</comment>
<comment type="cofactor">
    <cofactor evidence="1">
        <name>Mg(2+)</name>
        <dbReference type="ChEBI" id="CHEBI:18420"/>
    </cofactor>
</comment>
<comment type="activity regulation">
    <text evidence="1">Inhibited by Li(+).</text>
</comment>
<comment type="pathway">
    <text evidence="1">Signal transduction; phosphatidylinositol signaling pathway.</text>
</comment>
<comment type="subunit">
    <text evidence="1">Monomer.</text>
</comment>
<comment type="interaction">
    <interactant intactId="EBI-725432">
        <id>P49441</id>
    </interactant>
    <interactant intactId="EBI-16439278">
        <id>Q6FHY5</id>
        <label>MEOX2</label>
    </interactant>
    <organismsDiffer>false</organismsDiffer>
    <experiments>3</experiments>
</comment>
<comment type="tissue specificity">
    <text>Ubiquitously expressed, with highest levels in pancreas and kidney.</text>
</comment>
<comment type="similarity">
    <text evidence="4">Belongs to the inositol monophosphatase superfamily.</text>
</comment>
<proteinExistence type="evidence at protein level"/>
<feature type="chain" id="PRO_0000142510" description="Inositol polyphosphate 1-phosphatase">
    <location>
        <begin position="1"/>
        <end position="399"/>
    </location>
</feature>
<feature type="binding site" evidence="1">
    <location>
        <position position="54"/>
    </location>
    <ligand>
        <name>Li(+)</name>
        <dbReference type="ChEBI" id="CHEBI:49713"/>
        <note>inhibitor</note>
    </ligand>
</feature>
<feature type="binding site" evidence="1">
    <location>
        <position position="79"/>
    </location>
    <ligand>
        <name>Mg(2+)</name>
        <dbReference type="ChEBI" id="CHEBI:18420"/>
        <label>1</label>
    </ligand>
</feature>
<feature type="binding site" evidence="1">
    <location>
        <position position="80"/>
    </location>
    <ligand>
        <name>Li(+)</name>
        <dbReference type="ChEBI" id="CHEBI:49713"/>
        <note>inhibitor</note>
    </ligand>
</feature>
<feature type="binding site" evidence="1">
    <location>
        <position position="153"/>
    </location>
    <ligand>
        <name>Mg(2+)</name>
        <dbReference type="ChEBI" id="CHEBI:18420"/>
        <label>1</label>
    </ligand>
</feature>
<feature type="binding site" evidence="1">
    <location>
        <position position="153"/>
    </location>
    <ligand>
        <name>Mg(2+)</name>
        <dbReference type="ChEBI" id="CHEBI:18420"/>
        <label>2</label>
    </ligand>
</feature>
<feature type="binding site" evidence="1">
    <location>
        <position position="155"/>
    </location>
    <ligand>
        <name>Mg(2+)</name>
        <dbReference type="ChEBI" id="CHEBI:18420"/>
        <label>1</label>
    </ligand>
</feature>
<feature type="binding site" evidence="1">
    <location>
        <position position="156"/>
    </location>
    <ligand>
        <name>1D-myo-inositol 1,4-bisphosphate</name>
        <dbReference type="ChEBI" id="CHEBI:58282"/>
    </ligand>
</feature>
<feature type="binding site" evidence="1">
    <location>
        <position position="157"/>
    </location>
    <ligand>
        <name>1D-myo-inositol 1,4-bisphosphate</name>
        <dbReference type="ChEBI" id="CHEBI:58282"/>
    </ligand>
</feature>
<feature type="binding site" evidence="1">
    <location>
        <position position="158"/>
    </location>
    <ligand>
        <name>1D-myo-inositol 1,4-bisphosphate</name>
        <dbReference type="ChEBI" id="CHEBI:58282"/>
    </ligand>
</feature>
<feature type="binding site" evidence="1">
    <location>
        <position position="267"/>
    </location>
    <ligand>
        <name>1D-myo-inositol 1,4-bisphosphate</name>
        <dbReference type="ChEBI" id="CHEBI:58282"/>
    </ligand>
</feature>
<feature type="binding site" evidence="1">
    <location>
        <position position="269"/>
    </location>
    <ligand>
        <name>1D-myo-inositol 1,4-bisphosphate</name>
        <dbReference type="ChEBI" id="CHEBI:58282"/>
    </ligand>
</feature>
<feature type="binding site" evidence="1">
    <location>
        <position position="289"/>
    </location>
    <ligand>
        <name>1D-myo-inositol 1,4-bisphosphate</name>
        <dbReference type="ChEBI" id="CHEBI:58282"/>
    </ligand>
</feature>
<feature type="binding site" evidence="1">
    <location>
        <position position="290"/>
    </location>
    <ligand>
        <name>1D-myo-inositol 1,4-bisphosphate</name>
        <dbReference type="ChEBI" id="CHEBI:58282"/>
    </ligand>
</feature>
<feature type="binding site" evidence="1">
    <location>
        <position position="293"/>
    </location>
    <ligand>
        <name>1D-myo-inositol 1,4-bisphosphate</name>
        <dbReference type="ChEBI" id="CHEBI:58282"/>
    </ligand>
</feature>
<feature type="binding site" evidence="1">
    <location>
        <position position="311"/>
    </location>
    <ligand>
        <name>1D-myo-inositol 1,4-bisphosphate</name>
        <dbReference type="ChEBI" id="CHEBI:58282"/>
    </ligand>
</feature>
<feature type="binding site" evidence="1">
    <location>
        <position position="316"/>
    </location>
    <ligand>
        <name>Mg(2+)</name>
        <dbReference type="ChEBI" id="CHEBI:18420"/>
        <label>2</label>
    </ligand>
</feature>
<feature type="modified residue" description="Phosphoserine" evidence="6">
    <location>
        <position position="317"/>
    </location>
</feature>
<feature type="sequence variant" id="VAR_019669" description="Frequency not significantly different between lithium-treated bipolar patients and healthy controls; dbSNP:rs7592352." evidence="3">
    <original>T</original>
    <variation>A</variation>
    <location>
        <position position="228"/>
    </location>
</feature>
<feature type="sequence variant" id="VAR_049599" description="In dbSNP:rs35616200.">
    <original>V</original>
    <variation>M</variation>
    <location>
        <position position="355"/>
    </location>
</feature>
<organism>
    <name type="scientific">Homo sapiens</name>
    <name type="common">Human</name>
    <dbReference type="NCBI Taxonomy" id="9606"/>
    <lineage>
        <taxon>Eukaryota</taxon>
        <taxon>Metazoa</taxon>
        <taxon>Chordata</taxon>
        <taxon>Craniata</taxon>
        <taxon>Vertebrata</taxon>
        <taxon>Euteleostomi</taxon>
        <taxon>Mammalia</taxon>
        <taxon>Eutheria</taxon>
        <taxon>Euarchontoglires</taxon>
        <taxon>Primates</taxon>
        <taxon>Haplorrhini</taxon>
        <taxon>Catarrhini</taxon>
        <taxon>Hominidae</taxon>
        <taxon>Homo</taxon>
    </lineage>
</organism>
<dbReference type="EC" id="3.1.3.57" evidence="2"/>
<dbReference type="EMBL" id="L08488">
    <property type="protein sequence ID" value="AAA36117.1"/>
    <property type="molecule type" value="mRNA"/>
</dbReference>
<dbReference type="EMBL" id="AF141325">
    <property type="protein sequence ID" value="AAD46766.1"/>
    <property type="molecule type" value="Genomic_DNA"/>
</dbReference>
<dbReference type="EMBL" id="BC015496">
    <property type="protein sequence ID" value="AAH15496.1"/>
    <property type="molecule type" value="mRNA"/>
</dbReference>
<dbReference type="CCDS" id="CCDS2305.1"/>
<dbReference type="RefSeq" id="NP_001122400.1">
    <property type="nucleotide sequence ID" value="NM_001128928.2"/>
</dbReference>
<dbReference type="RefSeq" id="NP_002185.1">
    <property type="nucleotide sequence ID" value="NM_002194.4"/>
</dbReference>
<dbReference type="RefSeq" id="XP_005246589.1">
    <property type="nucleotide sequence ID" value="XM_005246532.1"/>
</dbReference>
<dbReference type="RefSeq" id="XP_024308643.1">
    <property type="nucleotide sequence ID" value="XM_024452875.2"/>
</dbReference>
<dbReference type="RefSeq" id="XP_047300148.1">
    <property type="nucleotide sequence ID" value="XM_047444192.1"/>
</dbReference>
<dbReference type="RefSeq" id="XP_047300149.1">
    <property type="nucleotide sequence ID" value="XM_047444193.1"/>
</dbReference>
<dbReference type="RefSeq" id="XP_047300150.1">
    <property type="nucleotide sequence ID" value="XM_047444194.1"/>
</dbReference>
<dbReference type="RefSeq" id="XP_047300151.1">
    <property type="nucleotide sequence ID" value="XM_047444195.1"/>
</dbReference>
<dbReference type="RefSeq" id="XP_047300152.1">
    <property type="nucleotide sequence ID" value="XM_047444196.1"/>
</dbReference>
<dbReference type="RefSeq" id="XP_054197802.1">
    <property type="nucleotide sequence ID" value="XM_054341827.1"/>
</dbReference>
<dbReference type="RefSeq" id="XP_054197803.1">
    <property type="nucleotide sequence ID" value="XM_054341828.1"/>
</dbReference>
<dbReference type="RefSeq" id="XP_054197804.1">
    <property type="nucleotide sequence ID" value="XM_054341829.1"/>
</dbReference>
<dbReference type="RefSeq" id="XP_054197805.1">
    <property type="nucleotide sequence ID" value="XM_054341830.1"/>
</dbReference>
<dbReference type="RefSeq" id="XP_054197806.1">
    <property type="nucleotide sequence ID" value="XM_054341831.1"/>
</dbReference>
<dbReference type="RefSeq" id="XP_054197807.1">
    <property type="nucleotide sequence ID" value="XM_054341832.1"/>
</dbReference>
<dbReference type="RefSeq" id="XP_054197808.1">
    <property type="nucleotide sequence ID" value="XM_054341833.1"/>
</dbReference>
<dbReference type="RefSeq" id="XP_054197809.1">
    <property type="nucleotide sequence ID" value="XM_054341834.1"/>
</dbReference>
<dbReference type="RefSeq" id="XP_054197810.1">
    <property type="nucleotide sequence ID" value="XM_054341835.1"/>
</dbReference>
<dbReference type="RefSeq" id="XP_054197811.1">
    <property type="nucleotide sequence ID" value="XM_054341836.1"/>
</dbReference>
<dbReference type="SMR" id="P49441"/>
<dbReference type="BioGRID" id="109840">
    <property type="interactions" value="30"/>
</dbReference>
<dbReference type="FunCoup" id="P49441">
    <property type="interactions" value="812"/>
</dbReference>
<dbReference type="IntAct" id="P49441">
    <property type="interactions" value="6"/>
</dbReference>
<dbReference type="MINT" id="P49441"/>
<dbReference type="STRING" id="9606.ENSP00000376142"/>
<dbReference type="DEPOD" id="INPP1"/>
<dbReference type="GlyGen" id="P49441">
    <property type="glycosylation" value="1 site, 1 O-linked glycan (1 site)"/>
</dbReference>
<dbReference type="iPTMnet" id="P49441"/>
<dbReference type="PhosphoSitePlus" id="P49441"/>
<dbReference type="BioMuta" id="INPP1"/>
<dbReference type="DMDM" id="1352464"/>
<dbReference type="jPOST" id="P49441"/>
<dbReference type="MassIVE" id="P49441"/>
<dbReference type="PaxDb" id="9606-ENSP00000376142"/>
<dbReference type="PeptideAtlas" id="P49441"/>
<dbReference type="ProteomicsDB" id="56010"/>
<dbReference type="Pumba" id="P49441"/>
<dbReference type="TopDownProteomics" id="P49441"/>
<dbReference type="Antibodypedia" id="34038">
    <property type="antibodies" value="144 antibodies from 22 providers"/>
</dbReference>
<dbReference type="DNASU" id="3628"/>
<dbReference type="Ensembl" id="ENST00000322522.8">
    <property type="protein sequence ID" value="ENSP00000325423.4"/>
    <property type="gene ID" value="ENSG00000151689.13"/>
</dbReference>
<dbReference type="Ensembl" id="ENST00000392329.7">
    <property type="protein sequence ID" value="ENSP00000376142.2"/>
    <property type="gene ID" value="ENSG00000151689.13"/>
</dbReference>
<dbReference type="GeneID" id="3628"/>
<dbReference type="KEGG" id="hsa:3628"/>
<dbReference type="MANE-Select" id="ENST00000392329.7">
    <property type="protein sequence ID" value="ENSP00000376142.2"/>
    <property type="RefSeq nucleotide sequence ID" value="NM_001128928.2"/>
    <property type="RefSeq protein sequence ID" value="NP_001122400.1"/>
</dbReference>
<dbReference type="AGR" id="HGNC:6071"/>
<dbReference type="CTD" id="3628"/>
<dbReference type="DisGeNET" id="3628"/>
<dbReference type="GeneCards" id="INPP1"/>
<dbReference type="HGNC" id="HGNC:6071">
    <property type="gene designation" value="INPP1"/>
</dbReference>
<dbReference type="HPA" id="ENSG00000151689">
    <property type="expression patterns" value="Low tissue specificity"/>
</dbReference>
<dbReference type="MIM" id="147263">
    <property type="type" value="gene"/>
</dbReference>
<dbReference type="neXtProt" id="NX_P49441"/>
<dbReference type="OpenTargets" id="ENSG00000151689"/>
<dbReference type="PharmGKB" id="PA29880"/>
<dbReference type="VEuPathDB" id="HostDB:ENSG00000151689"/>
<dbReference type="eggNOG" id="KOG3099">
    <property type="taxonomic scope" value="Eukaryota"/>
</dbReference>
<dbReference type="GeneTree" id="ENSGT00940000156785"/>
<dbReference type="HOGENOM" id="CLU_043868_2_0_1"/>
<dbReference type="InParanoid" id="P49441"/>
<dbReference type="OMA" id="KGSTFRW"/>
<dbReference type="OrthoDB" id="9977309at2759"/>
<dbReference type="PAN-GO" id="P49441">
    <property type="GO annotations" value="2 GO annotations based on evolutionary models"/>
</dbReference>
<dbReference type="PhylomeDB" id="P49441"/>
<dbReference type="TreeFam" id="TF314300"/>
<dbReference type="BioCyc" id="MetaCyc:HS07761-MONOMER"/>
<dbReference type="BRENDA" id="3.1.3.57">
    <property type="organism ID" value="2681"/>
</dbReference>
<dbReference type="PathwayCommons" id="P49441"/>
<dbReference type="Reactome" id="R-HSA-1855183">
    <property type="pathway name" value="Synthesis of IP2, IP, and Ins in the cytosol"/>
</dbReference>
<dbReference type="SignaLink" id="P49441"/>
<dbReference type="UniPathway" id="UPA00944"/>
<dbReference type="BioGRID-ORCS" id="3628">
    <property type="hits" value="11 hits in 1169 CRISPR screens"/>
</dbReference>
<dbReference type="ChiTaRS" id="INPP1">
    <property type="organism name" value="human"/>
</dbReference>
<dbReference type="GeneWiki" id="INPP1"/>
<dbReference type="GenomeRNAi" id="3628"/>
<dbReference type="Pharos" id="P49441">
    <property type="development level" value="Tbio"/>
</dbReference>
<dbReference type="PRO" id="PR:P49441"/>
<dbReference type="Proteomes" id="UP000005640">
    <property type="component" value="Chromosome 2"/>
</dbReference>
<dbReference type="RNAct" id="P49441">
    <property type="molecule type" value="protein"/>
</dbReference>
<dbReference type="Bgee" id="ENSG00000151689">
    <property type="expression patterns" value="Expressed in sperm and 204 other cell types or tissues"/>
</dbReference>
<dbReference type="ExpressionAtlas" id="P49441">
    <property type="expression patterns" value="baseline and differential"/>
</dbReference>
<dbReference type="GO" id="GO:0005829">
    <property type="term" value="C:cytosol"/>
    <property type="evidence" value="ECO:0000304"/>
    <property type="project" value="Reactome"/>
</dbReference>
<dbReference type="GO" id="GO:0052829">
    <property type="term" value="F:inositol-1,3,4-trisphosphate 1-phosphatase activity"/>
    <property type="evidence" value="ECO:0000250"/>
    <property type="project" value="UniProtKB"/>
</dbReference>
<dbReference type="GO" id="GO:0004441">
    <property type="term" value="F:inositol-1,4-bisphosphate 1-phosphatase activity"/>
    <property type="evidence" value="ECO:0000250"/>
    <property type="project" value="UniProtKB"/>
</dbReference>
<dbReference type="GO" id="GO:0046872">
    <property type="term" value="F:metal ion binding"/>
    <property type="evidence" value="ECO:0007669"/>
    <property type="project" value="UniProtKB-KW"/>
</dbReference>
<dbReference type="GO" id="GO:0006796">
    <property type="term" value="P:phosphate-containing compound metabolic process"/>
    <property type="evidence" value="ECO:0000304"/>
    <property type="project" value="ProtInc"/>
</dbReference>
<dbReference type="GO" id="GO:0046854">
    <property type="term" value="P:phosphatidylinositol phosphate biosynthetic process"/>
    <property type="evidence" value="ECO:0007669"/>
    <property type="project" value="InterPro"/>
</dbReference>
<dbReference type="GO" id="GO:0007165">
    <property type="term" value="P:signal transduction"/>
    <property type="evidence" value="ECO:0000304"/>
    <property type="project" value="ProtInc"/>
</dbReference>
<dbReference type="CDD" id="cd01640">
    <property type="entry name" value="IPPase"/>
    <property type="match status" value="1"/>
</dbReference>
<dbReference type="FunFam" id="3.40.190.80:FF:000015">
    <property type="entry name" value="Inositol polyphosphate 1-phosphatase"/>
    <property type="match status" value="1"/>
</dbReference>
<dbReference type="FunFam" id="4.10.460.10:FF:000001">
    <property type="entry name" value="Inositol polyphosphate 1-phosphatase"/>
    <property type="match status" value="1"/>
</dbReference>
<dbReference type="Gene3D" id="3.40.190.80">
    <property type="match status" value="1"/>
</dbReference>
<dbReference type="Gene3D" id="3.30.540.10">
    <property type="entry name" value="Fructose-1,6-Bisphosphatase, subunit A, domain 1"/>
    <property type="match status" value="1"/>
</dbReference>
<dbReference type="Gene3D" id="4.10.460.10">
    <property type="entry name" value="Inositol Polyphosphate 1-phosphatase, domain 1"/>
    <property type="match status" value="1"/>
</dbReference>
<dbReference type="InterPro" id="IPR050725">
    <property type="entry name" value="CysQ/Inositol_MonoPase"/>
</dbReference>
<dbReference type="InterPro" id="IPR020583">
    <property type="entry name" value="Inositol_monoP_metal-BS"/>
</dbReference>
<dbReference type="InterPro" id="IPR000760">
    <property type="entry name" value="Inositol_monophosphatase-like"/>
</dbReference>
<dbReference type="InterPro" id="IPR020550">
    <property type="entry name" value="Inositol_monophosphatase_CS"/>
</dbReference>
<dbReference type="InterPro" id="IPR044897">
    <property type="entry name" value="INPP1_dom_1"/>
</dbReference>
<dbReference type="PANTHER" id="PTHR43028">
    <property type="entry name" value="3'(2'),5'-BISPHOSPHATE NUCLEOTIDASE 1"/>
    <property type="match status" value="1"/>
</dbReference>
<dbReference type="PANTHER" id="PTHR43028:SF3">
    <property type="entry name" value="INOSITOL POLYPHOSPHATE 1-PHOSPHATASE"/>
    <property type="match status" value="1"/>
</dbReference>
<dbReference type="Pfam" id="PF00459">
    <property type="entry name" value="Inositol_P"/>
    <property type="match status" value="1"/>
</dbReference>
<dbReference type="SUPFAM" id="SSF56655">
    <property type="entry name" value="Carbohydrate phosphatase"/>
    <property type="match status" value="1"/>
</dbReference>
<dbReference type="PROSITE" id="PS00629">
    <property type="entry name" value="IMP_1"/>
    <property type="match status" value="1"/>
</dbReference>
<dbReference type="PROSITE" id="PS00630">
    <property type="entry name" value="IMP_2"/>
    <property type="match status" value="1"/>
</dbReference>
<reference key="1">
    <citation type="journal article" date="1993" name="Proc. Natl. Acad. Sci. U.S.A.">
        <title>Cloning, heterologous expression, and chromosomal localization of human inositol polyphosphate 1-phosphatase.</title>
        <authorList>
            <person name="York J.D."/>
            <person name="Veile R.A."/>
            <person name="Donis-Keller H."/>
            <person name="Majerus P.W."/>
        </authorList>
    </citation>
    <scope>NUCLEOTIDE SEQUENCE [MRNA]</scope>
    <scope>FUNCTION</scope>
    <scope>CATALYTIC ACTIVITY</scope>
</reference>
<reference key="2">
    <citation type="journal article" date="1999" name="Pharmacogenetics">
        <title>Genomic structure and sequence analysis of a human inositol polyphosphate 1-phosphatase gene (INPP1).</title>
        <authorList>
            <person name="Lovlie R."/>
            <person name="Gulbrandsen A.-K."/>
            <person name="Molven A."/>
            <person name="Steen V.M."/>
        </authorList>
    </citation>
    <scope>NUCLEOTIDE SEQUENCE [GENOMIC DNA]</scope>
</reference>
<reference key="3">
    <citation type="journal article" date="2004" name="Genome Res.">
        <title>The status, quality, and expansion of the NIH full-length cDNA project: the Mammalian Gene Collection (MGC).</title>
        <authorList>
            <consortium name="The MGC Project Team"/>
        </authorList>
    </citation>
    <scope>NUCLEOTIDE SEQUENCE [LARGE SCALE MRNA]</scope>
    <source>
        <tissue>Colon</tissue>
    </source>
</reference>
<reference key="4">
    <citation type="journal article" date="2008" name="J. Proteome Res.">
        <title>Combining protein-based IMAC, peptide-based IMAC, and MudPIT for efficient phosphoproteomic analysis.</title>
        <authorList>
            <person name="Cantin G.T."/>
            <person name="Yi W."/>
            <person name="Lu B."/>
            <person name="Park S.K."/>
            <person name="Xu T."/>
            <person name="Lee J.-D."/>
            <person name="Yates J.R. III"/>
        </authorList>
    </citation>
    <scope>PHOSPHORYLATION [LARGE SCALE ANALYSIS] AT SER-317</scope>
    <scope>IDENTIFICATION BY MASS SPECTROMETRY [LARGE SCALE ANALYSIS]</scope>
    <source>
        <tissue>Cervix carcinoma</tissue>
    </source>
</reference>
<reference key="5">
    <citation type="journal article" date="2011" name="BMC Syst. Biol.">
        <title>Initial characterization of the human central proteome.</title>
        <authorList>
            <person name="Burkard T.R."/>
            <person name="Planyavsky M."/>
            <person name="Kaupe I."/>
            <person name="Breitwieser F.P."/>
            <person name="Buerckstuemmer T."/>
            <person name="Bennett K.L."/>
            <person name="Superti-Furga G."/>
            <person name="Colinge J."/>
        </authorList>
    </citation>
    <scope>IDENTIFICATION BY MASS SPECTROMETRY [LARGE SCALE ANALYSIS]</scope>
</reference>
<reference key="6">
    <citation type="journal article" date="2014" name="J. Proteomics">
        <title>An enzyme assisted RP-RPLC approach for in-depth analysis of human liver phosphoproteome.</title>
        <authorList>
            <person name="Bian Y."/>
            <person name="Song C."/>
            <person name="Cheng K."/>
            <person name="Dong M."/>
            <person name="Wang F."/>
            <person name="Huang J."/>
            <person name="Sun D."/>
            <person name="Wang L."/>
            <person name="Ye M."/>
            <person name="Zou H."/>
        </authorList>
    </citation>
    <scope>IDENTIFICATION BY MASS SPECTROMETRY [LARGE SCALE ANALYSIS]</scope>
    <source>
        <tissue>Liver</tissue>
    </source>
</reference>
<reference key="7">
    <citation type="journal article" date="1998" name="Pharmacogenetics">
        <title>The polymorphic inositol polyphosphate 1-phosphatase gene as a candidate for pharmacogenetic prediction of lithium-responsive manic-depressive illness.</title>
        <authorList>
            <person name="Steen V.M."/>
            <person name="Lovlie R."/>
            <person name="Osher Y."/>
            <person name="Belmaker R.H."/>
            <person name="Berle J.O."/>
            <person name="Gulbrandsen A.K."/>
        </authorList>
    </citation>
    <scope>VARIANT ALA-228</scope>
</reference>
<accession>P49441</accession>